<reference key="1">
    <citation type="submission" date="1997-03" db="EMBL/GenBank/DDBJ databases">
        <title>A 148 kbp sequence of the region between 35 and 47 degree of the Bacillus subtilis genome.</title>
        <authorList>
            <person name="Kasahara Y."/>
            <person name="Nakai S."/>
            <person name="Lee S."/>
            <person name="Sadaie Y."/>
            <person name="Ogasawara N."/>
        </authorList>
    </citation>
    <scope>NUCLEOTIDE SEQUENCE [GENOMIC DNA]</scope>
    <source>
        <strain>168</strain>
    </source>
</reference>
<reference key="2">
    <citation type="journal article" date="1997" name="Nature">
        <title>The complete genome sequence of the Gram-positive bacterium Bacillus subtilis.</title>
        <authorList>
            <person name="Kunst F."/>
            <person name="Ogasawara N."/>
            <person name="Moszer I."/>
            <person name="Albertini A.M."/>
            <person name="Alloni G."/>
            <person name="Azevedo V."/>
            <person name="Bertero M.G."/>
            <person name="Bessieres P."/>
            <person name="Bolotin A."/>
            <person name="Borchert S."/>
            <person name="Borriss R."/>
            <person name="Boursier L."/>
            <person name="Brans A."/>
            <person name="Braun M."/>
            <person name="Brignell S.C."/>
            <person name="Bron S."/>
            <person name="Brouillet S."/>
            <person name="Bruschi C.V."/>
            <person name="Caldwell B."/>
            <person name="Capuano V."/>
            <person name="Carter N.M."/>
            <person name="Choi S.-K."/>
            <person name="Codani J.-J."/>
            <person name="Connerton I.F."/>
            <person name="Cummings N.J."/>
            <person name="Daniel R.A."/>
            <person name="Denizot F."/>
            <person name="Devine K.M."/>
            <person name="Duesterhoeft A."/>
            <person name="Ehrlich S.D."/>
            <person name="Emmerson P.T."/>
            <person name="Entian K.-D."/>
            <person name="Errington J."/>
            <person name="Fabret C."/>
            <person name="Ferrari E."/>
            <person name="Foulger D."/>
            <person name="Fritz C."/>
            <person name="Fujita M."/>
            <person name="Fujita Y."/>
            <person name="Fuma S."/>
            <person name="Galizzi A."/>
            <person name="Galleron N."/>
            <person name="Ghim S.-Y."/>
            <person name="Glaser P."/>
            <person name="Goffeau A."/>
            <person name="Golightly E.J."/>
            <person name="Grandi G."/>
            <person name="Guiseppi G."/>
            <person name="Guy B.J."/>
            <person name="Haga K."/>
            <person name="Haiech J."/>
            <person name="Harwood C.R."/>
            <person name="Henaut A."/>
            <person name="Hilbert H."/>
            <person name="Holsappel S."/>
            <person name="Hosono S."/>
            <person name="Hullo M.-F."/>
            <person name="Itaya M."/>
            <person name="Jones L.-M."/>
            <person name="Joris B."/>
            <person name="Karamata D."/>
            <person name="Kasahara Y."/>
            <person name="Klaerr-Blanchard M."/>
            <person name="Klein C."/>
            <person name="Kobayashi Y."/>
            <person name="Koetter P."/>
            <person name="Koningstein G."/>
            <person name="Krogh S."/>
            <person name="Kumano M."/>
            <person name="Kurita K."/>
            <person name="Lapidus A."/>
            <person name="Lardinois S."/>
            <person name="Lauber J."/>
            <person name="Lazarevic V."/>
            <person name="Lee S.-M."/>
            <person name="Levine A."/>
            <person name="Liu H."/>
            <person name="Masuda S."/>
            <person name="Mauel C."/>
            <person name="Medigue C."/>
            <person name="Medina N."/>
            <person name="Mellado R.P."/>
            <person name="Mizuno M."/>
            <person name="Moestl D."/>
            <person name="Nakai S."/>
            <person name="Noback M."/>
            <person name="Noone D."/>
            <person name="O'Reilly M."/>
            <person name="Ogawa K."/>
            <person name="Ogiwara A."/>
            <person name="Oudega B."/>
            <person name="Park S.-H."/>
            <person name="Parro V."/>
            <person name="Pohl T.M."/>
            <person name="Portetelle D."/>
            <person name="Porwollik S."/>
            <person name="Prescott A.M."/>
            <person name="Presecan E."/>
            <person name="Pujic P."/>
            <person name="Purnelle B."/>
            <person name="Rapoport G."/>
            <person name="Rey M."/>
            <person name="Reynolds S."/>
            <person name="Rieger M."/>
            <person name="Rivolta C."/>
            <person name="Rocha E."/>
            <person name="Roche B."/>
            <person name="Rose M."/>
            <person name="Sadaie Y."/>
            <person name="Sato T."/>
            <person name="Scanlan E."/>
            <person name="Schleich S."/>
            <person name="Schroeter R."/>
            <person name="Scoffone F."/>
            <person name="Sekiguchi J."/>
            <person name="Sekowska A."/>
            <person name="Seror S.J."/>
            <person name="Serror P."/>
            <person name="Shin B.-S."/>
            <person name="Soldo B."/>
            <person name="Sorokin A."/>
            <person name="Tacconi E."/>
            <person name="Takagi T."/>
            <person name="Takahashi H."/>
            <person name="Takemaru K."/>
            <person name="Takeuchi M."/>
            <person name="Tamakoshi A."/>
            <person name="Tanaka T."/>
            <person name="Terpstra P."/>
            <person name="Tognoni A."/>
            <person name="Tosato V."/>
            <person name="Uchiyama S."/>
            <person name="Vandenbol M."/>
            <person name="Vannier F."/>
            <person name="Vassarotti A."/>
            <person name="Viari A."/>
            <person name="Wambutt R."/>
            <person name="Wedler E."/>
            <person name="Wedler H."/>
            <person name="Weitzenegger T."/>
            <person name="Winters P."/>
            <person name="Wipat A."/>
            <person name="Yamamoto H."/>
            <person name="Yamane K."/>
            <person name="Yasumoto K."/>
            <person name="Yata K."/>
            <person name="Yoshida K."/>
            <person name="Yoshikawa H.-F."/>
            <person name="Zumstein E."/>
            <person name="Yoshikawa H."/>
            <person name="Danchin A."/>
        </authorList>
    </citation>
    <scope>NUCLEOTIDE SEQUENCE [LARGE SCALE GENOMIC DNA]</scope>
    <source>
        <strain>168</strain>
    </source>
</reference>
<dbReference type="EMBL" id="AB001488">
    <property type="protein sequence ID" value="BAA19326.1"/>
    <property type="molecule type" value="Genomic_DNA"/>
</dbReference>
<dbReference type="EMBL" id="AL009126">
    <property type="protein sequence ID" value="CAB12296.1"/>
    <property type="molecule type" value="Genomic_DNA"/>
</dbReference>
<dbReference type="PIR" id="A69775">
    <property type="entry name" value="A69775"/>
</dbReference>
<dbReference type="RefSeq" id="NP_388370.1">
    <property type="nucleotide sequence ID" value="NC_000964.3"/>
</dbReference>
<dbReference type="RefSeq" id="WP_009966624.1">
    <property type="nucleotide sequence ID" value="NZ_OZ025638.1"/>
</dbReference>
<dbReference type="FunCoup" id="P96637">
    <property type="interactions" value="171"/>
</dbReference>
<dbReference type="STRING" id="224308.BSU04890"/>
<dbReference type="PaxDb" id="224308-BSU04890"/>
<dbReference type="EnsemblBacteria" id="CAB12296">
    <property type="protein sequence ID" value="CAB12296"/>
    <property type="gene ID" value="BSU_04890"/>
</dbReference>
<dbReference type="GeneID" id="938146"/>
<dbReference type="KEGG" id="bsu:BSU04890"/>
<dbReference type="PATRIC" id="fig|224308.179.peg.520"/>
<dbReference type="InParanoid" id="P96637"/>
<dbReference type="OrthoDB" id="2907467at2"/>
<dbReference type="BioCyc" id="BSUB:BSU04890-MONOMER"/>
<dbReference type="Proteomes" id="UP000001570">
    <property type="component" value="Chromosome"/>
</dbReference>
<protein>
    <recommendedName>
        <fullName>Uncharacterized protein YdcT</fullName>
    </recommendedName>
</protein>
<gene>
    <name type="primary">ydcT</name>
    <name type="ordered locus">BSU04890</name>
</gene>
<feature type="chain" id="PRO_0000049494" description="Uncharacterized protein YdcT">
    <location>
        <begin position="1"/>
        <end position="88"/>
    </location>
</feature>
<organism>
    <name type="scientific">Bacillus subtilis (strain 168)</name>
    <dbReference type="NCBI Taxonomy" id="224308"/>
    <lineage>
        <taxon>Bacteria</taxon>
        <taxon>Bacillati</taxon>
        <taxon>Bacillota</taxon>
        <taxon>Bacilli</taxon>
        <taxon>Bacillales</taxon>
        <taxon>Bacillaceae</taxon>
        <taxon>Bacillus</taxon>
    </lineage>
</organism>
<name>YDCT_BACSU</name>
<proteinExistence type="predicted"/>
<accession>P96637</accession>
<keyword id="KW-1185">Reference proteome</keyword>
<sequence>MFNINLLNQARLESDLDSLGCLDIAEELIEKMMEDVFYSDVAQRIIVQTLAVINNANAKLQATFNILEDEDMETDERSVEFEGISYYE</sequence>